<comment type="function">
    <text evidence="1">One of the primary rRNA binding proteins, it binds directly to 16S rRNA where it helps nucleate assembly of the platform of the 30S subunit by binding and bridging several RNA helices of the 16S rRNA.</text>
</comment>
<comment type="function">
    <text evidence="1">Forms an intersubunit bridge (bridge B4) with the 23S rRNA of the 50S subunit in the ribosome.</text>
</comment>
<comment type="subunit">
    <text evidence="1">Part of the 30S ribosomal subunit. Forms a bridge to the 50S subunit in the 70S ribosome, contacting the 23S rRNA.</text>
</comment>
<comment type="similarity">
    <text evidence="1">Belongs to the universal ribosomal protein uS15 family.</text>
</comment>
<evidence type="ECO:0000255" key="1">
    <source>
        <dbReference type="HAMAP-Rule" id="MF_01343"/>
    </source>
</evidence>
<evidence type="ECO:0000305" key="2"/>
<proteinExistence type="inferred from homology"/>
<protein>
    <recommendedName>
        <fullName evidence="1">Small ribosomal subunit protein uS15</fullName>
    </recommendedName>
    <alternativeName>
        <fullName evidence="2">30S ribosomal protein S15</fullName>
    </alternativeName>
</protein>
<dbReference type="EMBL" id="CP000383">
    <property type="protein sequence ID" value="ABG59054.1"/>
    <property type="molecule type" value="Genomic_DNA"/>
</dbReference>
<dbReference type="RefSeq" id="WP_011585171.1">
    <property type="nucleotide sequence ID" value="NC_008255.1"/>
</dbReference>
<dbReference type="SMR" id="Q11U60"/>
<dbReference type="STRING" id="269798.CHU_1787"/>
<dbReference type="KEGG" id="chu:CHU_1787"/>
<dbReference type="eggNOG" id="COG0184">
    <property type="taxonomic scope" value="Bacteria"/>
</dbReference>
<dbReference type="HOGENOM" id="CLU_148518_0_1_10"/>
<dbReference type="OrthoDB" id="9799262at2"/>
<dbReference type="Proteomes" id="UP000001822">
    <property type="component" value="Chromosome"/>
</dbReference>
<dbReference type="GO" id="GO:0022627">
    <property type="term" value="C:cytosolic small ribosomal subunit"/>
    <property type="evidence" value="ECO:0007669"/>
    <property type="project" value="TreeGrafter"/>
</dbReference>
<dbReference type="GO" id="GO:0019843">
    <property type="term" value="F:rRNA binding"/>
    <property type="evidence" value="ECO:0007669"/>
    <property type="project" value="UniProtKB-UniRule"/>
</dbReference>
<dbReference type="GO" id="GO:0003735">
    <property type="term" value="F:structural constituent of ribosome"/>
    <property type="evidence" value="ECO:0007669"/>
    <property type="project" value="InterPro"/>
</dbReference>
<dbReference type="GO" id="GO:0006412">
    <property type="term" value="P:translation"/>
    <property type="evidence" value="ECO:0007669"/>
    <property type="project" value="UniProtKB-UniRule"/>
</dbReference>
<dbReference type="CDD" id="cd00353">
    <property type="entry name" value="Ribosomal_S15p_S13e"/>
    <property type="match status" value="1"/>
</dbReference>
<dbReference type="FunFam" id="1.10.287.10:FF:000002">
    <property type="entry name" value="30S ribosomal protein S15"/>
    <property type="match status" value="1"/>
</dbReference>
<dbReference type="Gene3D" id="6.10.250.3130">
    <property type="match status" value="1"/>
</dbReference>
<dbReference type="Gene3D" id="1.10.287.10">
    <property type="entry name" value="S15/NS1, RNA-binding"/>
    <property type="match status" value="1"/>
</dbReference>
<dbReference type="HAMAP" id="MF_01343_B">
    <property type="entry name" value="Ribosomal_uS15_B"/>
    <property type="match status" value="1"/>
</dbReference>
<dbReference type="InterPro" id="IPR000589">
    <property type="entry name" value="Ribosomal_uS15"/>
</dbReference>
<dbReference type="InterPro" id="IPR005290">
    <property type="entry name" value="Ribosomal_uS15_bac-type"/>
</dbReference>
<dbReference type="InterPro" id="IPR009068">
    <property type="entry name" value="uS15_NS1_RNA-bd_sf"/>
</dbReference>
<dbReference type="NCBIfam" id="TIGR00952">
    <property type="entry name" value="S15_bact"/>
    <property type="match status" value="1"/>
</dbReference>
<dbReference type="PANTHER" id="PTHR23321">
    <property type="entry name" value="RIBOSOMAL PROTEIN S15, BACTERIAL AND ORGANELLAR"/>
    <property type="match status" value="1"/>
</dbReference>
<dbReference type="PANTHER" id="PTHR23321:SF26">
    <property type="entry name" value="SMALL RIBOSOMAL SUBUNIT PROTEIN US15M"/>
    <property type="match status" value="1"/>
</dbReference>
<dbReference type="Pfam" id="PF00312">
    <property type="entry name" value="Ribosomal_S15"/>
    <property type="match status" value="1"/>
</dbReference>
<dbReference type="SMART" id="SM01387">
    <property type="entry name" value="Ribosomal_S15"/>
    <property type="match status" value="1"/>
</dbReference>
<dbReference type="SUPFAM" id="SSF47060">
    <property type="entry name" value="S15/NS1 RNA-binding domain"/>
    <property type="match status" value="1"/>
</dbReference>
<dbReference type="PROSITE" id="PS00362">
    <property type="entry name" value="RIBOSOMAL_S15"/>
    <property type="match status" value="1"/>
</dbReference>
<name>RS15_CYTH3</name>
<reference key="1">
    <citation type="journal article" date="2007" name="Appl. Environ. Microbiol.">
        <title>Genome sequence of the cellulolytic gliding bacterium Cytophaga hutchinsonii.</title>
        <authorList>
            <person name="Xie G."/>
            <person name="Bruce D.C."/>
            <person name="Challacombe J.F."/>
            <person name="Chertkov O."/>
            <person name="Detter J.C."/>
            <person name="Gilna P."/>
            <person name="Han C.S."/>
            <person name="Lucas S."/>
            <person name="Misra M."/>
            <person name="Myers G.L."/>
            <person name="Richardson P."/>
            <person name="Tapia R."/>
            <person name="Thayer N."/>
            <person name="Thompson L.S."/>
            <person name="Brettin T.S."/>
            <person name="Henrissat B."/>
            <person name="Wilson D.B."/>
            <person name="McBride M.J."/>
        </authorList>
    </citation>
    <scope>NUCLEOTIDE SEQUENCE [LARGE SCALE GENOMIC DNA]</scope>
    <source>
        <strain>ATCC 33406 / DSM 1761 / JCM 20678 / CIP 103989 / IAM 12607 / NBRC 15051 / NCIMB 9469 / D465</strain>
    </source>
</reference>
<keyword id="KW-1185">Reference proteome</keyword>
<keyword id="KW-0687">Ribonucleoprotein</keyword>
<keyword id="KW-0689">Ribosomal protein</keyword>
<keyword id="KW-0694">RNA-binding</keyword>
<keyword id="KW-0699">rRNA-binding</keyword>
<sequence>MYLTSEIKKEIFKTNGTAKSATDTGSPESQIALFSHRIAHLTEHLKVNKKDYSTQLGLMKLVGKRRRLLNYLQKTEISRYRAIIAQLNLRK</sequence>
<gene>
    <name evidence="1" type="primary">rpsO</name>
    <name type="ordered locus">CHU_1787</name>
</gene>
<organism>
    <name type="scientific">Cytophaga hutchinsonii (strain ATCC 33406 / DSM 1761 / CIP 103989 / NBRC 15051 / NCIMB 9469 / D465)</name>
    <dbReference type="NCBI Taxonomy" id="269798"/>
    <lineage>
        <taxon>Bacteria</taxon>
        <taxon>Pseudomonadati</taxon>
        <taxon>Bacteroidota</taxon>
        <taxon>Cytophagia</taxon>
        <taxon>Cytophagales</taxon>
        <taxon>Cytophagaceae</taxon>
        <taxon>Cytophaga</taxon>
    </lineage>
</organism>
<accession>Q11U60</accession>
<feature type="chain" id="PRO_1000054776" description="Small ribosomal subunit protein uS15">
    <location>
        <begin position="1"/>
        <end position="91"/>
    </location>
</feature>